<comment type="function">
    <text evidence="1">Catalyzes the methyl esterification of L-isoaspartyl residues in peptides and proteins that result from spontaneous decomposition of normal L-aspartyl and L-asparaginyl residues. It plays a role in the repair and/or degradation of damaged proteins.</text>
</comment>
<comment type="catalytic activity">
    <reaction evidence="1">
        <text>[protein]-L-isoaspartate + S-adenosyl-L-methionine = [protein]-L-isoaspartate alpha-methyl ester + S-adenosyl-L-homocysteine</text>
        <dbReference type="Rhea" id="RHEA:12705"/>
        <dbReference type="Rhea" id="RHEA-COMP:12143"/>
        <dbReference type="Rhea" id="RHEA-COMP:12144"/>
        <dbReference type="ChEBI" id="CHEBI:57856"/>
        <dbReference type="ChEBI" id="CHEBI:59789"/>
        <dbReference type="ChEBI" id="CHEBI:90596"/>
        <dbReference type="ChEBI" id="CHEBI:90598"/>
        <dbReference type="EC" id="2.1.1.77"/>
    </reaction>
</comment>
<comment type="subcellular location">
    <subcellularLocation>
        <location evidence="1">Cytoplasm</location>
    </subcellularLocation>
</comment>
<comment type="similarity">
    <text evidence="1">Belongs to the methyltransferase superfamily. L-isoaspartyl/D-aspartyl protein methyltransferase family.</text>
</comment>
<accession>Q87AK5</accession>
<protein>
    <recommendedName>
        <fullName evidence="1">Protein-L-isoaspartate O-methyltransferase</fullName>
        <ecNumber evidence="1">2.1.1.77</ecNumber>
    </recommendedName>
    <alternativeName>
        <fullName evidence="1">L-isoaspartyl protein carboxyl methyltransferase</fullName>
    </alternativeName>
    <alternativeName>
        <fullName evidence="1">Protein L-isoaspartyl methyltransferase</fullName>
    </alternativeName>
    <alternativeName>
        <fullName evidence="1">Protein-beta-aspartate methyltransferase</fullName>
        <shortName evidence="1">PIMT</shortName>
    </alternativeName>
</protein>
<reference key="1">
    <citation type="journal article" date="2003" name="J. Bacteriol.">
        <title>Comparative analyses of the complete genome sequences of Pierce's disease and citrus variegated chlorosis strains of Xylella fastidiosa.</title>
        <authorList>
            <person name="Van Sluys M.A."/>
            <person name="de Oliveira M.C."/>
            <person name="Monteiro-Vitorello C.B."/>
            <person name="Miyaki C.Y."/>
            <person name="Furlan L.R."/>
            <person name="Camargo L.E.A."/>
            <person name="da Silva A.C.R."/>
            <person name="Moon D.H."/>
            <person name="Takita M.A."/>
            <person name="Lemos E.G.M."/>
            <person name="Machado M.A."/>
            <person name="Ferro M.I.T."/>
            <person name="da Silva F.R."/>
            <person name="Goldman M.H.S."/>
            <person name="Goldman G.H."/>
            <person name="Lemos M.V.F."/>
            <person name="El-Dorry H."/>
            <person name="Tsai S.M."/>
            <person name="Carrer H."/>
            <person name="Carraro D.M."/>
            <person name="de Oliveira R.C."/>
            <person name="Nunes L.R."/>
            <person name="Siqueira W.J."/>
            <person name="Coutinho L.L."/>
            <person name="Kimura E.T."/>
            <person name="Ferro E.S."/>
            <person name="Harakava R."/>
            <person name="Kuramae E.E."/>
            <person name="Marino C.L."/>
            <person name="Giglioti E."/>
            <person name="Abreu I.L."/>
            <person name="Alves L.M.C."/>
            <person name="do Amaral A.M."/>
            <person name="Baia G.S."/>
            <person name="Blanco S.R."/>
            <person name="Brito M.S."/>
            <person name="Cannavan F.S."/>
            <person name="Celestino A.V."/>
            <person name="da Cunha A.F."/>
            <person name="Fenille R.C."/>
            <person name="Ferro J.A."/>
            <person name="Formighieri E.F."/>
            <person name="Kishi L.T."/>
            <person name="Leoni S.G."/>
            <person name="Oliveira A.R."/>
            <person name="Rosa V.E. Jr."/>
            <person name="Sassaki F.T."/>
            <person name="Sena J.A.D."/>
            <person name="de Souza A.A."/>
            <person name="Truffi D."/>
            <person name="Tsukumo F."/>
            <person name="Yanai G.M."/>
            <person name="Zaros L.G."/>
            <person name="Civerolo E.L."/>
            <person name="Simpson A.J.G."/>
            <person name="Almeida N.F. Jr."/>
            <person name="Setubal J.C."/>
            <person name="Kitajima J.P."/>
        </authorList>
    </citation>
    <scope>NUCLEOTIDE SEQUENCE [LARGE SCALE GENOMIC DNA]</scope>
    <source>
        <strain>Temecula1 / ATCC 700964</strain>
    </source>
</reference>
<sequence length="225" mass="24590">MTAPPSLQAKAVGIGMTSQRVRDRLVERLRECGIQDERVLSTIRIVPRHLFIDEALALRAYEDTALPIGHGQTISQPWVVARMTEAVMQVVPKKILEIGTGSGYQSAILASLGLEVYTIERIGKLLRQARKRFRQLGIKIRSKHDDGSTGWTEHAPYNAILVTAAAPTLIDTLIEQLAIGGRLVAPVGTASEQALVQLTRTIDGSITHEILEPVTFVSLLPGMLD</sequence>
<dbReference type="EC" id="2.1.1.77" evidence="1"/>
<dbReference type="EMBL" id="AE009442">
    <property type="protein sequence ID" value="AAO29652.1"/>
    <property type="molecule type" value="Genomic_DNA"/>
</dbReference>
<dbReference type="RefSeq" id="WP_011098268.1">
    <property type="nucleotide sequence ID" value="NC_004556.1"/>
</dbReference>
<dbReference type="SMR" id="Q87AK5"/>
<dbReference type="KEGG" id="xft:PD_1818"/>
<dbReference type="HOGENOM" id="CLU_055432_2_0_6"/>
<dbReference type="Proteomes" id="UP000002516">
    <property type="component" value="Chromosome"/>
</dbReference>
<dbReference type="GO" id="GO:0005737">
    <property type="term" value="C:cytoplasm"/>
    <property type="evidence" value="ECO:0007669"/>
    <property type="project" value="UniProtKB-SubCell"/>
</dbReference>
<dbReference type="GO" id="GO:0004719">
    <property type="term" value="F:protein-L-isoaspartate (D-aspartate) O-methyltransferase activity"/>
    <property type="evidence" value="ECO:0007669"/>
    <property type="project" value="UniProtKB-UniRule"/>
</dbReference>
<dbReference type="GO" id="GO:0032259">
    <property type="term" value="P:methylation"/>
    <property type="evidence" value="ECO:0007669"/>
    <property type="project" value="UniProtKB-KW"/>
</dbReference>
<dbReference type="GO" id="GO:0036211">
    <property type="term" value="P:protein modification process"/>
    <property type="evidence" value="ECO:0007669"/>
    <property type="project" value="UniProtKB-UniRule"/>
</dbReference>
<dbReference type="GO" id="GO:0030091">
    <property type="term" value="P:protein repair"/>
    <property type="evidence" value="ECO:0007669"/>
    <property type="project" value="UniProtKB-UniRule"/>
</dbReference>
<dbReference type="CDD" id="cd02440">
    <property type="entry name" value="AdoMet_MTases"/>
    <property type="match status" value="1"/>
</dbReference>
<dbReference type="FunFam" id="3.40.50.150:FF:000010">
    <property type="entry name" value="Protein-L-isoaspartate O-methyltransferase"/>
    <property type="match status" value="1"/>
</dbReference>
<dbReference type="Gene3D" id="3.40.50.150">
    <property type="entry name" value="Vaccinia Virus protein VP39"/>
    <property type="match status" value="1"/>
</dbReference>
<dbReference type="HAMAP" id="MF_00090">
    <property type="entry name" value="PIMT"/>
    <property type="match status" value="1"/>
</dbReference>
<dbReference type="InterPro" id="IPR000682">
    <property type="entry name" value="PCMT"/>
</dbReference>
<dbReference type="InterPro" id="IPR029063">
    <property type="entry name" value="SAM-dependent_MTases_sf"/>
</dbReference>
<dbReference type="NCBIfam" id="TIGR00080">
    <property type="entry name" value="pimt"/>
    <property type="match status" value="1"/>
</dbReference>
<dbReference type="NCBIfam" id="NF001453">
    <property type="entry name" value="PRK00312.1"/>
    <property type="match status" value="1"/>
</dbReference>
<dbReference type="PANTHER" id="PTHR11579">
    <property type="entry name" value="PROTEIN-L-ISOASPARTATE O-METHYLTRANSFERASE"/>
    <property type="match status" value="1"/>
</dbReference>
<dbReference type="PANTHER" id="PTHR11579:SF0">
    <property type="entry name" value="PROTEIN-L-ISOASPARTATE(D-ASPARTATE) O-METHYLTRANSFERASE"/>
    <property type="match status" value="1"/>
</dbReference>
<dbReference type="Pfam" id="PF01135">
    <property type="entry name" value="PCMT"/>
    <property type="match status" value="1"/>
</dbReference>
<dbReference type="SUPFAM" id="SSF53335">
    <property type="entry name" value="S-adenosyl-L-methionine-dependent methyltransferases"/>
    <property type="match status" value="1"/>
</dbReference>
<dbReference type="PROSITE" id="PS01279">
    <property type="entry name" value="PCMT"/>
    <property type="match status" value="1"/>
</dbReference>
<organism>
    <name type="scientific">Xylella fastidiosa (strain Temecula1 / ATCC 700964)</name>
    <dbReference type="NCBI Taxonomy" id="183190"/>
    <lineage>
        <taxon>Bacteria</taxon>
        <taxon>Pseudomonadati</taxon>
        <taxon>Pseudomonadota</taxon>
        <taxon>Gammaproteobacteria</taxon>
        <taxon>Lysobacterales</taxon>
        <taxon>Lysobacteraceae</taxon>
        <taxon>Xylella</taxon>
    </lineage>
</organism>
<keyword id="KW-0963">Cytoplasm</keyword>
<keyword id="KW-0489">Methyltransferase</keyword>
<keyword id="KW-1185">Reference proteome</keyword>
<keyword id="KW-0949">S-adenosyl-L-methionine</keyword>
<keyword id="KW-0808">Transferase</keyword>
<feature type="chain" id="PRO_0000351961" description="Protein-L-isoaspartate O-methyltransferase">
    <location>
        <begin position="1"/>
        <end position="225"/>
    </location>
</feature>
<feature type="active site" evidence="1">
    <location>
        <position position="75"/>
    </location>
</feature>
<gene>
    <name evidence="1" type="primary">pcm</name>
    <name type="ordered locus">PD_1818</name>
</gene>
<proteinExistence type="inferred from homology"/>
<name>PIMT_XYLFT</name>
<evidence type="ECO:0000255" key="1">
    <source>
        <dbReference type="HAMAP-Rule" id="MF_00090"/>
    </source>
</evidence>